<accession>B7M0D9</accession>
<gene>
    <name evidence="1" type="primary">fixB</name>
    <name type="ordered locus">ECIAI1_0044</name>
</gene>
<evidence type="ECO:0000255" key="1">
    <source>
        <dbReference type="HAMAP-Rule" id="MF_01056"/>
    </source>
</evidence>
<feature type="chain" id="PRO_1000136330" description="Protein FixB">
    <location>
        <begin position="1"/>
        <end position="313"/>
    </location>
</feature>
<feature type="binding site" evidence="1">
    <location>
        <begin position="255"/>
        <end position="283"/>
    </location>
    <ligand>
        <name>FAD</name>
        <dbReference type="ChEBI" id="CHEBI:57692"/>
    </ligand>
</feature>
<proteinExistence type="inferred from homology"/>
<reference key="1">
    <citation type="journal article" date="2009" name="PLoS Genet.">
        <title>Organised genome dynamics in the Escherichia coli species results in highly diverse adaptive paths.</title>
        <authorList>
            <person name="Touchon M."/>
            <person name="Hoede C."/>
            <person name="Tenaillon O."/>
            <person name="Barbe V."/>
            <person name="Baeriswyl S."/>
            <person name="Bidet P."/>
            <person name="Bingen E."/>
            <person name="Bonacorsi S."/>
            <person name="Bouchier C."/>
            <person name="Bouvet O."/>
            <person name="Calteau A."/>
            <person name="Chiapello H."/>
            <person name="Clermont O."/>
            <person name="Cruveiller S."/>
            <person name="Danchin A."/>
            <person name="Diard M."/>
            <person name="Dossat C."/>
            <person name="Karoui M.E."/>
            <person name="Frapy E."/>
            <person name="Garry L."/>
            <person name="Ghigo J.M."/>
            <person name="Gilles A.M."/>
            <person name="Johnson J."/>
            <person name="Le Bouguenec C."/>
            <person name="Lescat M."/>
            <person name="Mangenot S."/>
            <person name="Martinez-Jehanne V."/>
            <person name="Matic I."/>
            <person name="Nassif X."/>
            <person name="Oztas S."/>
            <person name="Petit M.A."/>
            <person name="Pichon C."/>
            <person name="Rouy Z."/>
            <person name="Ruf C.S."/>
            <person name="Schneider D."/>
            <person name="Tourret J."/>
            <person name="Vacherie B."/>
            <person name="Vallenet D."/>
            <person name="Medigue C."/>
            <person name="Rocha E.P.C."/>
            <person name="Denamur E."/>
        </authorList>
    </citation>
    <scope>NUCLEOTIDE SEQUENCE [LARGE SCALE GENOMIC DNA]</scope>
    <source>
        <strain>IAI1</strain>
    </source>
</reference>
<name>FIXB_ECO8A</name>
<dbReference type="EMBL" id="CU928160">
    <property type="protein sequence ID" value="CAQ96934.1"/>
    <property type="molecule type" value="Genomic_DNA"/>
</dbReference>
<dbReference type="RefSeq" id="WP_001091528.1">
    <property type="nucleotide sequence ID" value="NC_011741.1"/>
</dbReference>
<dbReference type="SMR" id="B7M0D9"/>
<dbReference type="KEGG" id="ecr:ECIAI1_0044"/>
<dbReference type="HOGENOM" id="CLU_034178_0_1_6"/>
<dbReference type="UniPathway" id="UPA00117"/>
<dbReference type="GO" id="GO:0009055">
    <property type="term" value="F:electron transfer activity"/>
    <property type="evidence" value="ECO:0007669"/>
    <property type="project" value="InterPro"/>
</dbReference>
<dbReference type="GO" id="GO:0050660">
    <property type="term" value="F:flavin adenine dinucleotide binding"/>
    <property type="evidence" value="ECO:0007669"/>
    <property type="project" value="InterPro"/>
</dbReference>
<dbReference type="GO" id="GO:0009437">
    <property type="term" value="P:carnitine metabolic process"/>
    <property type="evidence" value="ECO:0007669"/>
    <property type="project" value="UniProtKB-UniRule"/>
</dbReference>
<dbReference type="GO" id="GO:0033539">
    <property type="term" value="P:fatty acid beta-oxidation using acyl-CoA dehydrogenase"/>
    <property type="evidence" value="ECO:0007669"/>
    <property type="project" value="TreeGrafter"/>
</dbReference>
<dbReference type="FunFam" id="3.40.50.1220:FF:000004">
    <property type="entry name" value="Electron transfer flavoprotein"/>
    <property type="match status" value="1"/>
</dbReference>
<dbReference type="FunFam" id="3.40.50.620:FF:000067">
    <property type="entry name" value="Protein FixB"/>
    <property type="match status" value="1"/>
</dbReference>
<dbReference type="Gene3D" id="3.40.50.620">
    <property type="entry name" value="HUPs"/>
    <property type="match status" value="1"/>
</dbReference>
<dbReference type="Gene3D" id="3.40.50.1220">
    <property type="entry name" value="TPP-binding domain"/>
    <property type="match status" value="1"/>
</dbReference>
<dbReference type="HAMAP" id="MF_01056">
    <property type="entry name" value="FixB"/>
    <property type="match status" value="1"/>
</dbReference>
<dbReference type="InterPro" id="IPR029035">
    <property type="entry name" value="DHS-like_NAD/FAD-binding_dom"/>
</dbReference>
<dbReference type="InterPro" id="IPR014730">
    <property type="entry name" value="ETF_a/b_N"/>
</dbReference>
<dbReference type="InterPro" id="IPR001308">
    <property type="entry name" value="ETF_a/FixB"/>
</dbReference>
<dbReference type="InterPro" id="IPR014731">
    <property type="entry name" value="ETF_asu_C"/>
</dbReference>
<dbReference type="InterPro" id="IPR018206">
    <property type="entry name" value="ETF_asu_C_CS"/>
</dbReference>
<dbReference type="InterPro" id="IPR023461">
    <property type="entry name" value="FixB"/>
</dbReference>
<dbReference type="InterPro" id="IPR014729">
    <property type="entry name" value="Rossmann-like_a/b/a_fold"/>
</dbReference>
<dbReference type="NCBIfam" id="NF002889">
    <property type="entry name" value="PRK03363.1"/>
    <property type="match status" value="1"/>
</dbReference>
<dbReference type="PANTHER" id="PTHR43153">
    <property type="entry name" value="ELECTRON TRANSFER FLAVOPROTEIN ALPHA"/>
    <property type="match status" value="1"/>
</dbReference>
<dbReference type="PANTHER" id="PTHR43153:SF5">
    <property type="entry name" value="PROTEIN FIXB-RELATED"/>
    <property type="match status" value="1"/>
</dbReference>
<dbReference type="Pfam" id="PF01012">
    <property type="entry name" value="ETF"/>
    <property type="match status" value="1"/>
</dbReference>
<dbReference type="Pfam" id="PF00766">
    <property type="entry name" value="ETF_alpha"/>
    <property type="match status" value="1"/>
</dbReference>
<dbReference type="PIRSF" id="PIRSF000089">
    <property type="entry name" value="Electra_flavoP_a"/>
    <property type="match status" value="1"/>
</dbReference>
<dbReference type="SMART" id="SM00893">
    <property type="entry name" value="ETF"/>
    <property type="match status" value="1"/>
</dbReference>
<dbReference type="SUPFAM" id="SSF52402">
    <property type="entry name" value="Adenine nucleotide alpha hydrolases-like"/>
    <property type="match status" value="1"/>
</dbReference>
<dbReference type="SUPFAM" id="SSF52467">
    <property type="entry name" value="DHS-like NAD/FAD-binding domain"/>
    <property type="match status" value="1"/>
</dbReference>
<dbReference type="PROSITE" id="PS00696">
    <property type="entry name" value="ETF_ALPHA"/>
    <property type="match status" value="1"/>
</dbReference>
<sequence length="313" mass="33541">MNTFSQVWVFSDTPSRLPELMNGAQALANQINTFVLNDADGVQAIQLGANHVWKLNGKPDDRMIEDYAGVMADTIRQHGADGLVLLPNTRRGKLLAAKLGYRLKAAVSNDASTVSVQDGKATVKHMVYGGLAIGEERIATPYAVLTISSGTFDAAQPDASRTGETHTVEWQAPAVAITRTATQARQSNSVDLDKARLVVSVGRGIGSKENIALAEQLCKAIGAELACSRPVAENEKWMEHERYVGISNLMLKPELYLAVGISGQIQHMVGANASQTIFAINKDKNAPIFQYADYGIVGDAVKILPALTAALAR</sequence>
<organism>
    <name type="scientific">Escherichia coli O8 (strain IAI1)</name>
    <dbReference type="NCBI Taxonomy" id="585034"/>
    <lineage>
        <taxon>Bacteria</taxon>
        <taxon>Pseudomonadati</taxon>
        <taxon>Pseudomonadota</taxon>
        <taxon>Gammaproteobacteria</taxon>
        <taxon>Enterobacterales</taxon>
        <taxon>Enterobacteriaceae</taxon>
        <taxon>Escherichia</taxon>
    </lineage>
</organism>
<comment type="function">
    <text evidence="1">Required for anaerobic carnitine reduction. May bring reductant to CaiA.</text>
</comment>
<comment type="pathway">
    <text evidence="1">Amine and polyamine metabolism; carnitine metabolism.</text>
</comment>
<comment type="subunit">
    <text evidence="1">Heterodimer of FixA and FixB.</text>
</comment>
<comment type="similarity">
    <text evidence="1">Belongs to the ETF alpha-subunit/FixB family.</text>
</comment>
<keyword id="KW-0249">Electron transport</keyword>
<keyword id="KW-0274">FAD</keyword>
<keyword id="KW-0285">Flavoprotein</keyword>
<keyword id="KW-0813">Transport</keyword>
<protein>
    <recommendedName>
        <fullName evidence="1">Protein FixB</fullName>
    </recommendedName>
</protein>